<organism>
    <name type="scientific">Borrelia turicatae (strain 91E135)</name>
    <dbReference type="NCBI Taxonomy" id="314724"/>
    <lineage>
        <taxon>Bacteria</taxon>
        <taxon>Pseudomonadati</taxon>
        <taxon>Spirochaetota</taxon>
        <taxon>Spirochaetia</taxon>
        <taxon>Spirochaetales</taxon>
        <taxon>Borreliaceae</taxon>
        <taxon>Borrelia</taxon>
    </lineage>
</organism>
<gene>
    <name evidence="1" type="primary">rpmG</name>
    <name type="ordered locus">BT0396</name>
</gene>
<accession>A1QZI4</accession>
<name>RL33_BORT9</name>
<evidence type="ECO:0000255" key="1">
    <source>
        <dbReference type="HAMAP-Rule" id="MF_00294"/>
    </source>
</evidence>
<evidence type="ECO:0000305" key="2"/>
<keyword id="KW-1185">Reference proteome</keyword>
<keyword id="KW-0687">Ribonucleoprotein</keyword>
<keyword id="KW-0689">Ribosomal protein</keyword>
<dbReference type="EMBL" id="CP000049">
    <property type="protein sequence ID" value="AAX17726.1"/>
    <property type="molecule type" value="Genomic_DNA"/>
</dbReference>
<dbReference type="RefSeq" id="WP_011772345.1">
    <property type="nucleotide sequence ID" value="NZ_CP073176.1"/>
</dbReference>
<dbReference type="SMR" id="A1QZI4"/>
<dbReference type="GeneID" id="71843203"/>
<dbReference type="KEGG" id="btu:BT0396"/>
<dbReference type="eggNOG" id="COG0267">
    <property type="taxonomic scope" value="Bacteria"/>
</dbReference>
<dbReference type="HOGENOM" id="CLU_190949_0_2_12"/>
<dbReference type="Proteomes" id="UP000001205">
    <property type="component" value="Chromosome"/>
</dbReference>
<dbReference type="GO" id="GO:0005737">
    <property type="term" value="C:cytoplasm"/>
    <property type="evidence" value="ECO:0007669"/>
    <property type="project" value="UniProtKB-ARBA"/>
</dbReference>
<dbReference type="GO" id="GO:1990904">
    <property type="term" value="C:ribonucleoprotein complex"/>
    <property type="evidence" value="ECO:0007669"/>
    <property type="project" value="UniProtKB-KW"/>
</dbReference>
<dbReference type="GO" id="GO:0005840">
    <property type="term" value="C:ribosome"/>
    <property type="evidence" value="ECO:0007669"/>
    <property type="project" value="UniProtKB-KW"/>
</dbReference>
<dbReference type="GO" id="GO:0003735">
    <property type="term" value="F:structural constituent of ribosome"/>
    <property type="evidence" value="ECO:0007669"/>
    <property type="project" value="InterPro"/>
</dbReference>
<dbReference type="GO" id="GO:0006412">
    <property type="term" value="P:translation"/>
    <property type="evidence" value="ECO:0007669"/>
    <property type="project" value="UniProtKB-UniRule"/>
</dbReference>
<dbReference type="Gene3D" id="2.20.28.120">
    <property type="entry name" value="Ribosomal protein L33"/>
    <property type="match status" value="1"/>
</dbReference>
<dbReference type="HAMAP" id="MF_00294">
    <property type="entry name" value="Ribosomal_bL33"/>
    <property type="match status" value="1"/>
</dbReference>
<dbReference type="InterPro" id="IPR001705">
    <property type="entry name" value="Ribosomal_bL33"/>
</dbReference>
<dbReference type="InterPro" id="IPR018264">
    <property type="entry name" value="Ribosomal_bL33_CS"/>
</dbReference>
<dbReference type="InterPro" id="IPR038584">
    <property type="entry name" value="Ribosomal_bL33_sf"/>
</dbReference>
<dbReference type="InterPro" id="IPR011332">
    <property type="entry name" value="Ribosomal_zn-bd"/>
</dbReference>
<dbReference type="NCBIfam" id="NF001764">
    <property type="entry name" value="PRK00504.1"/>
    <property type="match status" value="1"/>
</dbReference>
<dbReference type="NCBIfam" id="NF001860">
    <property type="entry name" value="PRK00595.1"/>
    <property type="match status" value="1"/>
</dbReference>
<dbReference type="NCBIfam" id="TIGR01023">
    <property type="entry name" value="rpmG_bact"/>
    <property type="match status" value="1"/>
</dbReference>
<dbReference type="PANTHER" id="PTHR43168">
    <property type="entry name" value="50S RIBOSOMAL PROTEIN L33, CHLOROPLASTIC"/>
    <property type="match status" value="1"/>
</dbReference>
<dbReference type="PANTHER" id="PTHR43168:SF2">
    <property type="entry name" value="LARGE RIBOSOMAL SUBUNIT PROTEIN BL33C"/>
    <property type="match status" value="1"/>
</dbReference>
<dbReference type="Pfam" id="PF00471">
    <property type="entry name" value="Ribosomal_L33"/>
    <property type="match status" value="1"/>
</dbReference>
<dbReference type="SUPFAM" id="SSF57829">
    <property type="entry name" value="Zn-binding ribosomal proteins"/>
    <property type="match status" value="1"/>
</dbReference>
<dbReference type="PROSITE" id="PS00582">
    <property type="entry name" value="RIBOSOMAL_L33"/>
    <property type="match status" value="1"/>
</dbReference>
<proteinExistence type="inferred from homology"/>
<protein>
    <recommendedName>
        <fullName evidence="1">Large ribosomal subunit protein bL33</fullName>
    </recommendedName>
    <alternativeName>
        <fullName evidence="2">50S ribosomal protein L33</fullName>
    </alternativeName>
</protein>
<reference key="1">
    <citation type="submission" date="2004-12" db="EMBL/GenBank/DDBJ databases">
        <title>The genome sequence of Borrelia hermsii and Borrelia turicatae: comparative analysis of two agents of endemic N. America relapsing fever.</title>
        <authorList>
            <person name="Porcella S.F."/>
            <person name="Raffel S.J."/>
            <person name="Schrumpf M.E."/>
            <person name="Montgomery B."/>
            <person name="Smith T."/>
            <person name="Schwan T.G."/>
        </authorList>
    </citation>
    <scope>NUCLEOTIDE SEQUENCE [LARGE SCALE GENOMIC DNA]</scope>
    <source>
        <strain>91E135</strain>
    </source>
</reference>
<feature type="chain" id="PRO_1000194047" description="Large ribosomal subunit protein bL33">
    <location>
        <begin position="1"/>
        <end position="59"/>
    </location>
</feature>
<sequence length="59" mass="6855">MGKKKGKGAVELIALVCEETGIRNYTTTKNRRNKQEKLELMKYCPILRKHTLHKEGKIK</sequence>
<comment type="similarity">
    <text evidence="1">Belongs to the bacterial ribosomal protein bL33 family.</text>
</comment>